<dbReference type="EC" id="2.7.7.6" evidence="1"/>
<dbReference type="EMBL" id="CP000769">
    <property type="protein sequence ID" value="ABS26141.1"/>
    <property type="molecule type" value="Genomic_DNA"/>
</dbReference>
<dbReference type="RefSeq" id="WP_012096719.1">
    <property type="nucleotide sequence ID" value="NC_009675.1"/>
</dbReference>
<dbReference type="SMR" id="A7HBP5"/>
<dbReference type="STRING" id="404589.Anae109_1938"/>
<dbReference type="KEGG" id="afw:Anae109_1938"/>
<dbReference type="eggNOG" id="COG0202">
    <property type="taxonomic scope" value="Bacteria"/>
</dbReference>
<dbReference type="HOGENOM" id="CLU_053084_0_1_7"/>
<dbReference type="OrthoDB" id="9805706at2"/>
<dbReference type="Proteomes" id="UP000006382">
    <property type="component" value="Chromosome"/>
</dbReference>
<dbReference type="GO" id="GO:0005737">
    <property type="term" value="C:cytoplasm"/>
    <property type="evidence" value="ECO:0007669"/>
    <property type="project" value="UniProtKB-ARBA"/>
</dbReference>
<dbReference type="GO" id="GO:0000428">
    <property type="term" value="C:DNA-directed RNA polymerase complex"/>
    <property type="evidence" value="ECO:0007669"/>
    <property type="project" value="UniProtKB-KW"/>
</dbReference>
<dbReference type="GO" id="GO:0003677">
    <property type="term" value="F:DNA binding"/>
    <property type="evidence" value="ECO:0007669"/>
    <property type="project" value="UniProtKB-UniRule"/>
</dbReference>
<dbReference type="GO" id="GO:0003899">
    <property type="term" value="F:DNA-directed RNA polymerase activity"/>
    <property type="evidence" value="ECO:0007669"/>
    <property type="project" value="UniProtKB-UniRule"/>
</dbReference>
<dbReference type="GO" id="GO:0046983">
    <property type="term" value="F:protein dimerization activity"/>
    <property type="evidence" value="ECO:0007669"/>
    <property type="project" value="InterPro"/>
</dbReference>
<dbReference type="GO" id="GO:0006351">
    <property type="term" value="P:DNA-templated transcription"/>
    <property type="evidence" value="ECO:0007669"/>
    <property type="project" value="UniProtKB-UniRule"/>
</dbReference>
<dbReference type="CDD" id="cd06928">
    <property type="entry name" value="RNAP_alpha_NTD"/>
    <property type="match status" value="1"/>
</dbReference>
<dbReference type="FunFam" id="1.10.150.20:FF:000001">
    <property type="entry name" value="DNA-directed RNA polymerase subunit alpha"/>
    <property type="match status" value="1"/>
</dbReference>
<dbReference type="FunFam" id="2.170.120.12:FF:000001">
    <property type="entry name" value="DNA-directed RNA polymerase subunit alpha"/>
    <property type="match status" value="1"/>
</dbReference>
<dbReference type="Gene3D" id="1.10.150.20">
    <property type="entry name" value="5' to 3' exonuclease, C-terminal subdomain"/>
    <property type="match status" value="1"/>
</dbReference>
<dbReference type="Gene3D" id="2.170.120.12">
    <property type="entry name" value="DNA-directed RNA polymerase, insert domain"/>
    <property type="match status" value="1"/>
</dbReference>
<dbReference type="Gene3D" id="3.30.1360.10">
    <property type="entry name" value="RNA polymerase, RBP11-like subunit"/>
    <property type="match status" value="1"/>
</dbReference>
<dbReference type="HAMAP" id="MF_00059">
    <property type="entry name" value="RNApol_bact_RpoA"/>
    <property type="match status" value="1"/>
</dbReference>
<dbReference type="InterPro" id="IPR011262">
    <property type="entry name" value="DNA-dir_RNA_pol_insert"/>
</dbReference>
<dbReference type="InterPro" id="IPR011263">
    <property type="entry name" value="DNA-dir_RNA_pol_RpoA/D/Rpb3"/>
</dbReference>
<dbReference type="InterPro" id="IPR011773">
    <property type="entry name" value="DNA-dir_RpoA"/>
</dbReference>
<dbReference type="InterPro" id="IPR036603">
    <property type="entry name" value="RBP11-like"/>
</dbReference>
<dbReference type="InterPro" id="IPR011260">
    <property type="entry name" value="RNAP_asu_C"/>
</dbReference>
<dbReference type="InterPro" id="IPR036643">
    <property type="entry name" value="RNApol_insert_sf"/>
</dbReference>
<dbReference type="NCBIfam" id="NF003513">
    <property type="entry name" value="PRK05182.1-2"/>
    <property type="match status" value="1"/>
</dbReference>
<dbReference type="NCBIfam" id="NF003515">
    <property type="entry name" value="PRK05182.2-1"/>
    <property type="match status" value="1"/>
</dbReference>
<dbReference type="NCBIfam" id="NF003519">
    <property type="entry name" value="PRK05182.2-5"/>
    <property type="match status" value="1"/>
</dbReference>
<dbReference type="NCBIfam" id="TIGR02027">
    <property type="entry name" value="rpoA"/>
    <property type="match status" value="1"/>
</dbReference>
<dbReference type="Pfam" id="PF01000">
    <property type="entry name" value="RNA_pol_A_bac"/>
    <property type="match status" value="1"/>
</dbReference>
<dbReference type="Pfam" id="PF03118">
    <property type="entry name" value="RNA_pol_A_CTD"/>
    <property type="match status" value="1"/>
</dbReference>
<dbReference type="Pfam" id="PF01193">
    <property type="entry name" value="RNA_pol_L"/>
    <property type="match status" value="1"/>
</dbReference>
<dbReference type="SMART" id="SM00662">
    <property type="entry name" value="RPOLD"/>
    <property type="match status" value="1"/>
</dbReference>
<dbReference type="SUPFAM" id="SSF47789">
    <property type="entry name" value="C-terminal domain of RNA polymerase alpha subunit"/>
    <property type="match status" value="1"/>
</dbReference>
<dbReference type="SUPFAM" id="SSF56553">
    <property type="entry name" value="Insert subdomain of RNA polymerase alpha subunit"/>
    <property type="match status" value="1"/>
</dbReference>
<dbReference type="SUPFAM" id="SSF55257">
    <property type="entry name" value="RBP11-like subunits of RNA polymerase"/>
    <property type="match status" value="1"/>
</dbReference>
<keyword id="KW-0240">DNA-directed RNA polymerase</keyword>
<keyword id="KW-0548">Nucleotidyltransferase</keyword>
<keyword id="KW-1185">Reference proteome</keyword>
<keyword id="KW-0804">Transcription</keyword>
<keyword id="KW-0808">Transferase</keyword>
<feature type="chain" id="PRO_0000323615" description="DNA-directed RNA polymerase subunit alpha">
    <location>
        <begin position="1"/>
        <end position="339"/>
    </location>
</feature>
<feature type="region of interest" description="Alpha N-terminal domain (alpha-NTD)" evidence="1">
    <location>
        <begin position="1"/>
        <end position="238"/>
    </location>
</feature>
<feature type="region of interest" description="Alpha C-terminal domain (alpha-CTD)" evidence="1">
    <location>
        <begin position="255"/>
        <end position="339"/>
    </location>
</feature>
<evidence type="ECO:0000255" key="1">
    <source>
        <dbReference type="HAMAP-Rule" id="MF_00059"/>
    </source>
</evidence>
<accession>A7HBP5</accession>
<protein>
    <recommendedName>
        <fullName evidence="1">DNA-directed RNA polymerase subunit alpha</fullName>
        <shortName evidence="1">RNAP subunit alpha</shortName>
        <ecNumber evidence="1">2.7.7.6</ecNumber>
    </recommendedName>
    <alternativeName>
        <fullName evidence="1">RNA polymerase subunit alpha</fullName>
    </alternativeName>
    <alternativeName>
        <fullName evidence="1">Transcriptase subunit alpha</fullName>
    </alternativeName>
</protein>
<name>RPOA_ANADF</name>
<reference key="1">
    <citation type="journal article" date="2015" name="Genome Announc.">
        <title>Complete genome sequence of Anaeromyxobacter sp. Fw109-5, an anaerobic, metal-reducing bacterium isolated from a contaminated subsurface environment.</title>
        <authorList>
            <person name="Hwang C."/>
            <person name="Copeland A."/>
            <person name="Lucas S."/>
            <person name="Lapidus A."/>
            <person name="Barry K."/>
            <person name="Glavina Del Rio T."/>
            <person name="Dalin E."/>
            <person name="Tice H."/>
            <person name="Pitluck S."/>
            <person name="Sims D."/>
            <person name="Brettin T."/>
            <person name="Bruce D.C."/>
            <person name="Detter J.C."/>
            <person name="Han C.S."/>
            <person name="Schmutz J."/>
            <person name="Larimer F.W."/>
            <person name="Land M.L."/>
            <person name="Hauser L.J."/>
            <person name="Kyrpides N."/>
            <person name="Lykidis A."/>
            <person name="Richardson P."/>
            <person name="Belieav A."/>
            <person name="Sanford R.A."/>
            <person name="Loeffler F.E."/>
            <person name="Fields M.W."/>
        </authorList>
    </citation>
    <scope>NUCLEOTIDE SEQUENCE [LARGE SCALE GENOMIC DNA]</scope>
    <source>
        <strain>Fw109-5</strain>
    </source>
</reference>
<sequence>MVDPIVTKNWRDLIKPRGLVVDQESLSNTYGKFVAEPLERGFGITLGNSLRRVLLSSLQGAAITSVKIEGVEHEFMTIPEVAEDVTDIILNLKEVLLQIHTNEVKTLRIEADGPREIKAGDIIADGQVEILNPGHHILTISEGGRVRMEMTARRGRGYVPADKNKVPGQPIGTIPIDALFSPIRKVNYQVTNARVGQQTDYDKLSLEVWTDGSVAPNDAVAYAAKIVKEQLSIFINFDEAEEPAEEVKPVEEQKLNENLFRSVDELELSVRSANCLQNANIKTIGDLVQKTEAEMLKTKNFGRKSLKEIKEILAEMGLSLGMKLENWPPKAAPQGAPKV</sequence>
<proteinExistence type="inferred from homology"/>
<organism>
    <name type="scientific">Anaeromyxobacter sp. (strain Fw109-5)</name>
    <dbReference type="NCBI Taxonomy" id="404589"/>
    <lineage>
        <taxon>Bacteria</taxon>
        <taxon>Pseudomonadati</taxon>
        <taxon>Myxococcota</taxon>
        <taxon>Myxococcia</taxon>
        <taxon>Myxococcales</taxon>
        <taxon>Cystobacterineae</taxon>
        <taxon>Anaeromyxobacteraceae</taxon>
        <taxon>Anaeromyxobacter</taxon>
    </lineage>
</organism>
<comment type="function">
    <text evidence="1">DNA-dependent RNA polymerase catalyzes the transcription of DNA into RNA using the four ribonucleoside triphosphates as substrates.</text>
</comment>
<comment type="catalytic activity">
    <reaction evidence="1">
        <text>RNA(n) + a ribonucleoside 5'-triphosphate = RNA(n+1) + diphosphate</text>
        <dbReference type="Rhea" id="RHEA:21248"/>
        <dbReference type="Rhea" id="RHEA-COMP:14527"/>
        <dbReference type="Rhea" id="RHEA-COMP:17342"/>
        <dbReference type="ChEBI" id="CHEBI:33019"/>
        <dbReference type="ChEBI" id="CHEBI:61557"/>
        <dbReference type="ChEBI" id="CHEBI:140395"/>
        <dbReference type="EC" id="2.7.7.6"/>
    </reaction>
</comment>
<comment type="subunit">
    <text evidence="1">Homodimer. The RNAP catalytic core consists of 2 alpha, 1 beta, 1 beta' and 1 omega subunit. When a sigma factor is associated with the core the holoenzyme is formed, which can initiate transcription.</text>
</comment>
<comment type="domain">
    <text evidence="1">The N-terminal domain is essential for RNAP assembly and basal transcription, whereas the C-terminal domain is involved in interaction with transcriptional regulators and with upstream promoter elements.</text>
</comment>
<comment type="similarity">
    <text evidence="1">Belongs to the RNA polymerase alpha chain family.</text>
</comment>
<gene>
    <name evidence="1" type="primary">rpoA</name>
    <name type="ordered locus">Anae109_1938</name>
</gene>